<organism>
    <name type="scientific">Acinetobacter baumannii (strain ATCC 17978 / DSM 105126 / CIP 53.77 / LMG 1025 / NCDC KC755 / 5377)</name>
    <dbReference type="NCBI Taxonomy" id="400667"/>
    <lineage>
        <taxon>Bacteria</taxon>
        <taxon>Pseudomonadati</taxon>
        <taxon>Pseudomonadota</taxon>
        <taxon>Gammaproteobacteria</taxon>
        <taxon>Moraxellales</taxon>
        <taxon>Moraxellaceae</taxon>
        <taxon>Acinetobacter</taxon>
        <taxon>Acinetobacter calcoaceticus/baumannii complex</taxon>
    </lineage>
</organism>
<name>RS5_ACIBT</name>
<accession>A3M967</accession>
<keyword id="KW-0687">Ribonucleoprotein</keyword>
<keyword id="KW-0689">Ribosomal protein</keyword>
<keyword id="KW-0694">RNA-binding</keyword>
<keyword id="KW-0699">rRNA-binding</keyword>
<evidence type="ECO:0000255" key="1">
    <source>
        <dbReference type="HAMAP-Rule" id="MF_01307"/>
    </source>
</evidence>
<evidence type="ECO:0000305" key="2"/>
<feature type="chain" id="PRO_0000293192" description="Small ribosomal subunit protein uS5">
    <location>
        <begin position="1"/>
        <end position="166"/>
    </location>
</feature>
<feature type="domain" description="S5 DRBM" evidence="1">
    <location>
        <begin position="11"/>
        <end position="74"/>
    </location>
</feature>
<gene>
    <name evidence="1" type="primary">rpsE</name>
    <name type="ordered locus">A1S_3064</name>
</gene>
<proteinExistence type="inferred from homology"/>
<protein>
    <recommendedName>
        <fullName evidence="1">Small ribosomal subunit protein uS5</fullName>
    </recommendedName>
    <alternativeName>
        <fullName evidence="2">30S ribosomal protein S5</fullName>
    </alternativeName>
</protein>
<reference key="1">
    <citation type="journal article" date="2007" name="Genes Dev.">
        <title>New insights into Acinetobacter baumannii pathogenesis revealed by high-density pyrosequencing and transposon mutagenesis.</title>
        <authorList>
            <person name="Smith M.G."/>
            <person name="Gianoulis T.A."/>
            <person name="Pukatzki S."/>
            <person name="Mekalanos J.J."/>
            <person name="Ornston L.N."/>
            <person name="Gerstein M."/>
            <person name="Snyder M."/>
        </authorList>
    </citation>
    <scope>NUCLEOTIDE SEQUENCE [LARGE SCALE GENOMIC DNA]</scope>
    <source>
        <strain>ATCC 17978 / DSM 105126 / CIP 53.77 / LMG 1025 / NCDC KC755 / 5377</strain>
    </source>
</reference>
<sequence length="166" mass="17257">MAKVETKNEGLVEKLVAVDRVAKVVKGGRIFSFTALTVVGDGNGRVGFGRGKAREVPAAISKALEAARRNMITVDLAGTTLQHPVNARHGASRVYMQPASEGTGVIAGGAMRAVLEAAGVHNVLAKCYGSTNAANVVNATFKGLRDMTSPEKVAAKRGKSVEEIQG</sequence>
<dbReference type="EMBL" id="CP000521">
    <property type="protein sequence ID" value="ABO13461.2"/>
    <property type="status" value="ALT_FRAME"/>
    <property type="molecule type" value="Genomic_DNA"/>
</dbReference>
<dbReference type="SMR" id="A3M967"/>
<dbReference type="KEGG" id="acb:A1S_3064"/>
<dbReference type="HOGENOM" id="CLU_065898_2_2_6"/>
<dbReference type="GO" id="GO:0015935">
    <property type="term" value="C:small ribosomal subunit"/>
    <property type="evidence" value="ECO:0007669"/>
    <property type="project" value="InterPro"/>
</dbReference>
<dbReference type="GO" id="GO:0019843">
    <property type="term" value="F:rRNA binding"/>
    <property type="evidence" value="ECO:0007669"/>
    <property type="project" value="UniProtKB-UniRule"/>
</dbReference>
<dbReference type="GO" id="GO:0003735">
    <property type="term" value="F:structural constituent of ribosome"/>
    <property type="evidence" value="ECO:0007669"/>
    <property type="project" value="InterPro"/>
</dbReference>
<dbReference type="GO" id="GO:0006412">
    <property type="term" value="P:translation"/>
    <property type="evidence" value="ECO:0007669"/>
    <property type="project" value="UniProtKB-UniRule"/>
</dbReference>
<dbReference type="FunFam" id="3.30.160.20:FF:000001">
    <property type="entry name" value="30S ribosomal protein S5"/>
    <property type="match status" value="1"/>
</dbReference>
<dbReference type="FunFam" id="3.30.230.10:FF:000002">
    <property type="entry name" value="30S ribosomal protein S5"/>
    <property type="match status" value="1"/>
</dbReference>
<dbReference type="Gene3D" id="3.30.160.20">
    <property type="match status" value="1"/>
</dbReference>
<dbReference type="Gene3D" id="3.30.230.10">
    <property type="match status" value="1"/>
</dbReference>
<dbReference type="HAMAP" id="MF_01307_B">
    <property type="entry name" value="Ribosomal_uS5_B"/>
    <property type="match status" value="1"/>
</dbReference>
<dbReference type="InterPro" id="IPR020568">
    <property type="entry name" value="Ribosomal_Su5_D2-typ_SF"/>
</dbReference>
<dbReference type="InterPro" id="IPR000851">
    <property type="entry name" value="Ribosomal_uS5"/>
</dbReference>
<dbReference type="InterPro" id="IPR005712">
    <property type="entry name" value="Ribosomal_uS5_bac-type"/>
</dbReference>
<dbReference type="InterPro" id="IPR005324">
    <property type="entry name" value="Ribosomal_uS5_C"/>
</dbReference>
<dbReference type="InterPro" id="IPR013810">
    <property type="entry name" value="Ribosomal_uS5_N"/>
</dbReference>
<dbReference type="InterPro" id="IPR018192">
    <property type="entry name" value="Ribosomal_uS5_N_CS"/>
</dbReference>
<dbReference type="InterPro" id="IPR014721">
    <property type="entry name" value="Ribsml_uS5_D2-typ_fold_subgr"/>
</dbReference>
<dbReference type="NCBIfam" id="TIGR01021">
    <property type="entry name" value="rpsE_bact"/>
    <property type="match status" value="1"/>
</dbReference>
<dbReference type="PANTHER" id="PTHR48277">
    <property type="entry name" value="MITOCHONDRIAL RIBOSOMAL PROTEIN S5"/>
    <property type="match status" value="1"/>
</dbReference>
<dbReference type="PANTHER" id="PTHR48277:SF1">
    <property type="entry name" value="MITOCHONDRIAL RIBOSOMAL PROTEIN S5"/>
    <property type="match status" value="1"/>
</dbReference>
<dbReference type="Pfam" id="PF00333">
    <property type="entry name" value="Ribosomal_S5"/>
    <property type="match status" value="1"/>
</dbReference>
<dbReference type="Pfam" id="PF03719">
    <property type="entry name" value="Ribosomal_S5_C"/>
    <property type="match status" value="1"/>
</dbReference>
<dbReference type="SUPFAM" id="SSF54768">
    <property type="entry name" value="dsRNA-binding domain-like"/>
    <property type="match status" value="1"/>
</dbReference>
<dbReference type="SUPFAM" id="SSF54211">
    <property type="entry name" value="Ribosomal protein S5 domain 2-like"/>
    <property type="match status" value="1"/>
</dbReference>
<dbReference type="PROSITE" id="PS00585">
    <property type="entry name" value="RIBOSOMAL_S5"/>
    <property type="match status" value="1"/>
</dbReference>
<dbReference type="PROSITE" id="PS50881">
    <property type="entry name" value="S5_DSRBD"/>
    <property type="match status" value="1"/>
</dbReference>
<comment type="function">
    <text evidence="1">With S4 and S12 plays an important role in translational accuracy.</text>
</comment>
<comment type="function">
    <text evidence="1">Located at the back of the 30S subunit body where it stabilizes the conformation of the head with respect to the body.</text>
</comment>
<comment type="subunit">
    <text evidence="1">Part of the 30S ribosomal subunit. Contacts proteins S4 and S8.</text>
</comment>
<comment type="domain">
    <text>The N-terminal domain interacts with the head of the 30S subunit; the C-terminal domain interacts with the body and contacts protein S4. The interaction surface between S4 and S5 is involved in control of translational fidelity.</text>
</comment>
<comment type="similarity">
    <text evidence="1">Belongs to the universal ribosomal protein uS5 family.</text>
</comment>
<comment type="sequence caution" evidence="2">
    <conflict type="frameshift">
        <sequence resource="EMBL-CDS" id="ABO13461"/>
    </conflict>
</comment>